<accession>B4M5T5</accession>
<gene>
    <name evidence="2" type="primary">fig</name>
    <name type="ORF">GJ10517</name>
</gene>
<comment type="catalytic activity">
    <reaction>
        <text>O-phospho-L-seryl-[protein] + H2O = L-seryl-[protein] + phosphate</text>
        <dbReference type="Rhea" id="RHEA:20629"/>
        <dbReference type="Rhea" id="RHEA-COMP:9863"/>
        <dbReference type="Rhea" id="RHEA-COMP:11604"/>
        <dbReference type="ChEBI" id="CHEBI:15377"/>
        <dbReference type="ChEBI" id="CHEBI:29999"/>
        <dbReference type="ChEBI" id="CHEBI:43474"/>
        <dbReference type="ChEBI" id="CHEBI:83421"/>
        <dbReference type="EC" id="3.1.3.16"/>
    </reaction>
</comment>
<comment type="catalytic activity">
    <reaction>
        <text>O-phospho-L-threonyl-[protein] + H2O = L-threonyl-[protein] + phosphate</text>
        <dbReference type="Rhea" id="RHEA:47004"/>
        <dbReference type="Rhea" id="RHEA-COMP:11060"/>
        <dbReference type="Rhea" id="RHEA-COMP:11605"/>
        <dbReference type="ChEBI" id="CHEBI:15377"/>
        <dbReference type="ChEBI" id="CHEBI:30013"/>
        <dbReference type="ChEBI" id="CHEBI:43474"/>
        <dbReference type="ChEBI" id="CHEBI:61977"/>
        <dbReference type="EC" id="3.1.3.16"/>
    </reaction>
</comment>
<comment type="cofactor">
    <cofactor evidence="1 5">
        <name>Mg(2+)</name>
        <dbReference type="ChEBI" id="CHEBI:18420"/>
    </cofactor>
    <cofactor evidence="1 5">
        <name>Mn(2+)</name>
        <dbReference type="ChEBI" id="CHEBI:29035"/>
    </cofactor>
</comment>
<comment type="similarity">
    <text evidence="3">Belongs to the PP2C family.</text>
</comment>
<proteinExistence type="inferred from homology"/>
<feature type="chain" id="PRO_0000377404" description="Protein phosphatase PTC7 homolog fig">
    <location>
        <begin position="1"/>
        <end position="313"/>
    </location>
</feature>
<feature type="domain" description="PPM-type phosphatase" evidence="4">
    <location>
        <begin position="47"/>
        <end position="307"/>
    </location>
</feature>
<feature type="binding site" evidence="1">
    <location>
        <position position="83"/>
    </location>
    <ligand>
        <name>Mn(2+)</name>
        <dbReference type="ChEBI" id="CHEBI:29035"/>
        <label>1</label>
    </ligand>
</feature>
<feature type="binding site" evidence="1">
    <location>
        <position position="83"/>
    </location>
    <ligand>
        <name>Mn(2+)</name>
        <dbReference type="ChEBI" id="CHEBI:29035"/>
        <label>2</label>
    </ligand>
</feature>
<feature type="binding site" evidence="1">
    <location>
        <position position="84"/>
    </location>
    <ligand>
        <name>Mn(2+)</name>
        <dbReference type="ChEBI" id="CHEBI:29035"/>
        <label>1</label>
    </ligand>
</feature>
<feature type="binding site" evidence="1">
    <location>
        <position position="229"/>
    </location>
    <ligand>
        <name>Mn(2+)</name>
        <dbReference type="ChEBI" id="CHEBI:29035"/>
        <label>2</label>
    </ligand>
</feature>
<organism>
    <name type="scientific">Drosophila virilis</name>
    <name type="common">Fruit fly</name>
    <dbReference type="NCBI Taxonomy" id="7244"/>
    <lineage>
        <taxon>Eukaryota</taxon>
        <taxon>Metazoa</taxon>
        <taxon>Ecdysozoa</taxon>
        <taxon>Arthropoda</taxon>
        <taxon>Hexapoda</taxon>
        <taxon>Insecta</taxon>
        <taxon>Pterygota</taxon>
        <taxon>Neoptera</taxon>
        <taxon>Endopterygota</taxon>
        <taxon>Diptera</taxon>
        <taxon>Brachycera</taxon>
        <taxon>Muscomorpha</taxon>
        <taxon>Ephydroidea</taxon>
        <taxon>Drosophilidae</taxon>
        <taxon>Drosophila</taxon>
    </lineage>
</organism>
<sequence length="313" mass="34263">MFFTVRTLSNRTSHVLNCAFAQCRLLSSTASAKGVPRLIKAIQGSSKEPLTDLQLRLIGDNRYGEDSWFVSSTPKAETMGVADGVGGWRKLGIDAGVFARELMSHCSEFAEQAEYDGLNPRQLLIDSYDRLKNKRPCNVCGSSTACLVTLHRPDCTLHSANLGDSGFLVLRNGRVLHRSDEQLHCFNTPYQLTVPPHPAMDCVLRDSPEQAVSTHLPLQPGDLVLLATDGLFDNVPESMLINQLRALQGETRAEYLQQAANRLVDLAKTLSVSPTFQSPFALKARANNVDYGIGGKPDDITVILASLEVPDKL</sequence>
<protein>
    <recommendedName>
        <fullName>Protein phosphatase PTC7 homolog fig</fullName>
    </recommendedName>
    <alternativeName>
        <fullName>Fos intronic gene protein</fullName>
        <ecNumber>3.1.3.16</ecNumber>
    </alternativeName>
</protein>
<evidence type="ECO:0000250" key="1">
    <source>
        <dbReference type="UniProtKB" id="P35813"/>
    </source>
</evidence>
<evidence type="ECO:0000250" key="2">
    <source>
        <dbReference type="UniProtKB" id="Q9VAH4"/>
    </source>
</evidence>
<evidence type="ECO:0000255" key="3"/>
<evidence type="ECO:0000255" key="4">
    <source>
        <dbReference type="PROSITE-ProRule" id="PRU01082"/>
    </source>
</evidence>
<evidence type="ECO:0000305" key="5"/>
<evidence type="ECO:0000312" key="6">
    <source>
        <dbReference type="EMBL" id="EDW59011.1"/>
    </source>
</evidence>
<name>PTC71_DROVI</name>
<keyword id="KW-0378">Hydrolase</keyword>
<keyword id="KW-0460">Magnesium</keyword>
<keyword id="KW-0464">Manganese</keyword>
<keyword id="KW-0479">Metal-binding</keyword>
<keyword id="KW-0904">Protein phosphatase</keyword>
<keyword id="KW-1185">Reference proteome</keyword>
<dbReference type="EC" id="3.1.3.16"/>
<dbReference type="EMBL" id="CH940652">
    <property type="protein sequence ID" value="EDW59011.1"/>
    <property type="molecule type" value="Genomic_DNA"/>
</dbReference>
<dbReference type="RefSeq" id="XP_002055899.2">
    <property type="nucleotide sequence ID" value="XM_002055863.2"/>
</dbReference>
<dbReference type="SMR" id="B4M5T5"/>
<dbReference type="FunCoup" id="B4M5T5">
    <property type="interactions" value="93"/>
</dbReference>
<dbReference type="STRING" id="7244.B4M5T5"/>
<dbReference type="EnsemblMetazoa" id="FBtr0226442">
    <property type="protein sequence ID" value="FBpp0224934"/>
    <property type="gene ID" value="FBgn0197797"/>
</dbReference>
<dbReference type="EnsemblMetazoa" id="XM_002055863.3">
    <property type="protein sequence ID" value="XP_002055899.2"/>
    <property type="gene ID" value="LOC6632264"/>
</dbReference>
<dbReference type="GeneID" id="6632264"/>
<dbReference type="KEGG" id="dvi:6632264"/>
<dbReference type="CTD" id="43511"/>
<dbReference type="eggNOG" id="KOG1379">
    <property type="taxonomic scope" value="Eukaryota"/>
</dbReference>
<dbReference type="HOGENOM" id="CLU_029404_3_0_1"/>
<dbReference type="InParanoid" id="B4M5T5"/>
<dbReference type="OMA" id="DSWFVSS"/>
<dbReference type="OrthoDB" id="60843at2759"/>
<dbReference type="PhylomeDB" id="B4M5T5"/>
<dbReference type="Proteomes" id="UP000008792">
    <property type="component" value="Unassembled WGS sequence"/>
</dbReference>
<dbReference type="GO" id="GO:0005739">
    <property type="term" value="C:mitochondrion"/>
    <property type="evidence" value="ECO:0007669"/>
    <property type="project" value="TreeGrafter"/>
</dbReference>
<dbReference type="GO" id="GO:0046872">
    <property type="term" value="F:metal ion binding"/>
    <property type="evidence" value="ECO:0007669"/>
    <property type="project" value="UniProtKB-KW"/>
</dbReference>
<dbReference type="GO" id="GO:0004722">
    <property type="term" value="F:protein serine/threonine phosphatase activity"/>
    <property type="evidence" value="ECO:0000250"/>
    <property type="project" value="UniProtKB"/>
</dbReference>
<dbReference type="GO" id="GO:0016311">
    <property type="term" value="P:dephosphorylation"/>
    <property type="evidence" value="ECO:0000250"/>
    <property type="project" value="UniProtKB"/>
</dbReference>
<dbReference type="CDD" id="cd00143">
    <property type="entry name" value="PP2Cc"/>
    <property type="match status" value="1"/>
</dbReference>
<dbReference type="FunFam" id="3.60.40.10:FF:000009">
    <property type="entry name" value="Blast:Protein phosphatase PTC7 homolog"/>
    <property type="match status" value="1"/>
</dbReference>
<dbReference type="Gene3D" id="3.60.40.10">
    <property type="entry name" value="PPM-type phosphatase domain"/>
    <property type="match status" value="1"/>
</dbReference>
<dbReference type="InterPro" id="IPR036457">
    <property type="entry name" value="PPM-type-like_dom_sf"/>
</dbReference>
<dbReference type="InterPro" id="IPR001932">
    <property type="entry name" value="PPM-type_phosphatase-like_dom"/>
</dbReference>
<dbReference type="InterPro" id="IPR039123">
    <property type="entry name" value="PPTC7"/>
</dbReference>
<dbReference type="PANTHER" id="PTHR12320">
    <property type="entry name" value="PROTEIN PHOSPHATASE 2C"/>
    <property type="match status" value="1"/>
</dbReference>
<dbReference type="PANTHER" id="PTHR12320:SF1">
    <property type="entry name" value="PROTEIN PHOSPHATASE PTC7 HOMOLOG"/>
    <property type="match status" value="1"/>
</dbReference>
<dbReference type="Pfam" id="PF07228">
    <property type="entry name" value="SpoIIE"/>
    <property type="match status" value="1"/>
</dbReference>
<dbReference type="SMART" id="SM00331">
    <property type="entry name" value="PP2C_SIG"/>
    <property type="match status" value="1"/>
</dbReference>
<dbReference type="SMART" id="SM00332">
    <property type="entry name" value="PP2Cc"/>
    <property type="match status" value="1"/>
</dbReference>
<dbReference type="SUPFAM" id="SSF81606">
    <property type="entry name" value="PP2C-like"/>
    <property type="match status" value="1"/>
</dbReference>
<dbReference type="PROSITE" id="PS51746">
    <property type="entry name" value="PPM_2"/>
    <property type="match status" value="1"/>
</dbReference>
<reference evidence="6" key="1">
    <citation type="journal article" date="2007" name="Nature">
        <title>Evolution of genes and genomes on the Drosophila phylogeny.</title>
        <authorList>
            <consortium name="Drosophila 12 genomes consortium"/>
        </authorList>
    </citation>
    <scope>NUCLEOTIDE SEQUENCE [LARGE SCALE GENOMIC DNA]</scope>
    <source>
        <strain evidence="6">Tucson 15010-1051.87</strain>
    </source>
</reference>